<protein>
    <recommendedName>
        <fullName evidence="1">Chaperonin GroEL</fullName>
        <ecNumber evidence="1">5.6.1.7</ecNumber>
    </recommendedName>
    <alternativeName>
        <fullName evidence="1">60 kDa chaperonin</fullName>
    </alternativeName>
    <alternativeName>
        <fullName evidence="1">Chaperonin-60</fullName>
        <shortName evidence="1">Cpn60</shortName>
    </alternativeName>
</protein>
<proteinExistence type="inferred from homology"/>
<comment type="function">
    <text evidence="1">Together with its co-chaperonin GroES, plays an essential role in assisting protein folding. The GroEL-GroES system forms a nano-cage that allows encapsulation of the non-native substrate proteins and provides a physical environment optimized to promote and accelerate protein folding.</text>
</comment>
<comment type="catalytic activity">
    <reaction evidence="1">
        <text>ATP + H2O + a folded polypeptide = ADP + phosphate + an unfolded polypeptide.</text>
        <dbReference type="EC" id="5.6.1.7"/>
    </reaction>
</comment>
<comment type="subunit">
    <text evidence="1">Forms a cylinder of 14 subunits composed of two heptameric rings stacked back-to-back. Interacts with the co-chaperonin GroES.</text>
</comment>
<comment type="subcellular location">
    <subcellularLocation>
        <location evidence="1">Cytoplasm</location>
    </subcellularLocation>
</comment>
<comment type="similarity">
    <text evidence="1">Belongs to the chaperonin (HSP60) family.</text>
</comment>
<sequence length="542" mass="57036">MAKDIKFSADARAAMVRGVDILADTVKVTLGPKGRNVVLEKAFGSPLITNDGVTIAKEIELEDHFENMGAKLVSEVASKTNDIAGDGTTTATVLTQAIVREGLKNVTAGANPIGIRRGIEKATSAAVEELKAIAQPVSGKEAIAQVAAVSSRSEKVGEYISEAMERVGNDGVITIEESRGMETELEVVEGMQFDRGYLSQYMVTDNEKMVADLENPFILITDKKVSNIQEILPLLEEVLKTSRPLLIIADDVDGEALPTLVLNKIRGTFNVVAVKAPGFGDRRKAMLEDIAILTGGTVITEDLGLDLKDATIAALGQAAKVTVDKDSTVIVEGAGSAEAIANRVGLIKSQLETTTSEFDREKLQERLAKLAGGVAVIKVGAATETELKEMKLRIEDALNATRAAVEEGIVSGGGTALVTVIDKVAALELTGDEATGRNIVLRALEEPVRQIAYNAGYEGSVVIDKLKNSPVGTGFNAATGDWVDMIETGIIDPVKVTRSALQNAASVASLILTTEAVVANKPEPAAPAMPGGMDPSMMGGMM</sequence>
<gene>
    <name evidence="1" type="primary">groEL</name>
    <name evidence="1" type="synonym">groL</name>
    <name type="ordered locus">SUB1741</name>
</gene>
<name>CH60_STRU0</name>
<accession>B9DW28</accession>
<reference key="1">
    <citation type="journal article" date="2009" name="BMC Genomics">
        <title>Evidence for niche adaptation in the genome of the bovine pathogen Streptococcus uberis.</title>
        <authorList>
            <person name="Ward P.N."/>
            <person name="Holden M.T.G."/>
            <person name="Leigh J.A."/>
            <person name="Lennard N."/>
            <person name="Bignell A."/>
            <person name="Barron A."/>
            <person name="Clark L."/>
            <person name="Quail M.A."/>
            <person name="Woodward J."/>
            <person name="Barrell B.G."/>
            <person name="Egan S.A."/>
            <person name="Field T.R."/>
            <person name="Maskell D."/>
            <person name="Kehoe M."/>
            <person name="Dowson C.G."/>
            <person name="Chanter N."/>
            <person name="Whatmore A.M."/>
            <person name="Bentley S.D."/>
            <person name="Parkhill J."/>
        </authorList>
    </citation>
    <scope>NUCLEOTIDE SEQUENCE [LARGE SCALE GENOMIC DNA]</scope>
    <source>
        <strain>ATCC BAA-854 / 0140J</strain>
    </source>
</reference>
<keyword id="KW-0067">ATP-binding</keyword>
<keyword id="KW-0143">Chaperone</keyword>
<keyword id="KW-0963">Cytoplasm</keyword>
<keyword id="KW-0413">Isomerase</keyword>
<keyword id="KW-0547">Nucleotide-binding</keyword>
<keyword id="KW-1185">Reference proteome</keyword>
<feature type="chain" id="PRO_1000147046" description="Chaperonin GroEL">
    <location>
        <begin position="1"/>
        <end position="542"/>
    </location>
</feature>
<feature type="region of interest" description="Disordered" evidence="2">
    <location>
        <begin position="523"/>
        <end position="542"/>
    </location>
</feature>
<feature type="compositionally biased region" description="Low complexity" evidence="2">
    <location>
        <begin position="526"/>
        <end position="542"/>
    </location>
</feature>
<feature type="binding site" evidence="1">
    <location>
        <begin position="29"/>
        <end position="32"/>
    </location>
    <ligand>
        <name>ATP</name>
        <dbReference type="ChEBI" id="CHEBI:30616"/>
    </ligand>
</feature>
<feature type="binding site" evidence="1">
    <location>
        <begin position="86"/>
        <end position="90"/>
    </location>
    <ligand>
        <name>ATP</name>
        <dbReference type="ChEBI" id="CHEBI:30616"/>
    </ligand>
</feature>
<feature type="binding site" evidence="1">
    <location>
        <position position="413"/>
    </location>
    <ligand>
        <name>ATP</name>
        <dbReference type="ChEBI" id="CHEBI:30616"/>
    </ligand>
</feature>
<feature type="binding site" evidence="1">
    <location>
        <begin position="476"/>
        <end position="478"/>
    </location>
    <ligand>
        <name>ATP</name>
        <dbReference type="ChEBI" id="CHEBI:30616"/>
    </ligand>
</feature>
<feature type="binding site" evidence="1">
    <location>
        <position position="492"/>
    </location>
    <ligand>
        <name>ATP</name>
        <dbReference type="ChEBI" id="CHEBI:30616"/>
    </ligand>
</feature>
<evidence type="ECO:0000255" key="1">
    <source>
        <dbReference type="HAMAP-Rule" id="MF_00600"/>
    </source>
</evidence>
<evidence type="ECO:0000256" key="2">
    <source>
        <dbReference type="SAM" id="MobiDB-lite"/>
    </source>
</evidence>
<dbReference type="EC" id="5.6.1.7" evidence="1"/>
<dbReference type="EMBL" id="AM946015">
    <property type="protein sequence ID" value="CAR43696.1"/>
    <property type="molecule type" value="Genomic_DNA"/>
</dbReference>
<dbReference type="RefSeq" id="WP_015912032.1">
    <property type="nucleotide sequence ID" value="NC_012004.1"/>
</dbReference>
<dbReference type="SMR" id="B9DW28"/>
<dbReference type="STRING" id="218495.SUB1741"/>
<dbReference type="KEGG" id="sub:SUB1741"/>
<dbReference type="eggNOG" id="COG0459">
    <property type="taxonomic scope" value="Bacteria"/>
</dbReference>
<dbReference type="HOGENOM" id="CLU_016503_3_0_9"/>
<dbReference type="OrthoDB" id="9766614at2"/>
<dbReference type="Proteomes" id="UP000000449">
    <property type="component" value="Chromosome"/>
</dbReference>
<dbReference type="GO" id="GO:0005737">
    <property type="term" value="C:cytoplasm"/>
    <property type="evidence" value="ECO:0007669"/>
    <property type="project" value="UniProtKB-SubCell"/>
</dbReference>
<dbReference type="GO" id="GO:0005524">
    <property type="term" value="F:ATP binding"/>
    <property type="evidence" value="ECO:0007669"/>
    <property type="project" value="UniProtKB-UniRule"/>
</dbReference>
<dbReference type="GO" id="GO:0140662">
    <property type="term" value="F:ATP-dependent protein folding chaperone"/>
    <property type="evidence" value="ECO:0007669"/>
    <property type="project" value="InterPro"/>
</dbReference>
<dbReference type="GO" id="GO:0016853">
    <property type="term" value="F:isomerase activity"/>
    <property type="evidence" value="ECO:0007669"/>
    <property type="project" value="UniProtKB-KW"/>
</dbReference>
<dbReference type="GO" id="GO:0051082">
    <property type="term" value="F:unfolded protein binding"/>
    <property type="evidence" value="ECO:0007669"/>
    <property type="project" value="UniProtKB-UniRule"/>
</dbReference>
<dbReference type="GO" id="GO:0042026">
    <property type="term" value="P:protein refolding"/>
    <property type="evidence" value="ECO:0007669"/>
    <property type="project" value="UniProtKB-UniRule"/>
</dbReference>
<dbReference type="CDD" id="cd03344">
    <property type="entry name" value="GroEL"/>
    <property type="match status" value="1"/>
</dbReference>
<dbReference type="FunFam" id="1.10.560.10:FF:000001">
    <property type="entry name" value="60 kDa chaperonin"/>
    <property type="match status" value="1"/>
</dbReference>
<dbReference type="FunFam" id="3.50.7.10:FF:000001">
    <property type="entry name" value="60 kDa chaperonin"/>
    <property type="match status" value="1"/>
</dbReference>
<dbReference type="Gene3D" id="3.50.7.10">
    <property type="entry name" value="GroEL"/>
    <property type="match status" value="1"/>
</dbReference>
<dbReference type="Gene3D" id="1.10.560.10">
    <property type="entry name" value="GroEL-like equatorial domain"/>
    <property type="match status" value="1"/>
</dbReference>
<dbReference type="Gene3D" id="3.30.260.10">
    <property type="entry name" value="TCP-1-like chaperonin intermediate domain"/>
    <property type="match status" value="1"/>
</dbReference>
<dbReference type="HAMAP" id="MF_00600">
    <property type="entry name" value="CH60"/>
    <property type="match status" value="1"/>
</dbReference>
<dbReference type="InterPro" id="IPR018370">
    <property type="entry name" value="Chaperonin_Cpn60_CS"/>
</dbReference>
<dbReference type="InterPro" id="IPR001844">
    <property type="entry name" value="Cpn60/GroEL"/>
</dbReference>
<dbReference type="InterPro" id="IPR002423">
    <property type="entry name" value="Cpn60/GroEL/TCP-1"/>
</dbReference>
<dbReference type="InterPro" id="IPR027409">
    <property type="entry name" value="GroEL-like_apical_dom_sf"/>
</dbReference>
<dbReference type="InterPro" id="IPR027413">
    <property type="entry name" value="GROEL-like_equatorial_sf"/>
</dbReference>
<dbReference type="InterPro" id="IPR027410">
    <property type="entry name" value="TCP-1-like_intermed_sf"/>
</dbReference>
<dbReference type="NCBIfam" id="TIGR02348">
    <property type="entry name" value="GroEL"/>
    <property type="match status" value="1"/>
</dbReference>
<dbReference type="NCBIfam" id="NF000592">
    <property type="entry name" value="PRK00013.1"/>
    <property type="match status" value="1"/>
</dbReference>
<dbReference type="NCBIfam" id="NF009487">
    <property type="entry name" value="PRK12849.1"/>
    <property type="match status" value="1"/>
</dbReference>
<dbReference type="NCBIfam" id="NF009488">
    <property type="entry name" value="PRK12850.1"/>
    <property type="match status" value="1"/>
</dbReference>
<dbReference type="NCBIfam" id="NF009489">
    <property type="entry name" value="PRK12851.1"/>
    <property type="match status" value="1"/>
</dbReference>
<dbReference type="PANTHER" id="PTHR45633">
    <property type="entry name" value="60 KDA HEAT SHOCK PROTEIN, MITOCHONDRIAL"/>
    <property type="match status" value="1"/>
</dbReference>
<dbReference type="Pfam" id="PF00118">
    <property type="entry name" value="Cpn60_TCP1"/>
    <property type="match status" value="1"/>
</dbReference>
<dbReference type="PRINTS" id="PR00298">
    <property type="entry name" value="CHAPERONIN60"/>
</dbReference>
<dbReference type="SUPFAM" id="SSF52029">
    <property type="entry name" value="GroEL apical domain-like"/>
    <property type="match status" value="1"/>
</dbReference>
<dbReference type="SUPFAM" id="SSF48592">
    <property type="entry name" value="GroEL equatorial domain-like"/>
    <property type="match status" value="1"/>
</dbReference>
<dbReference type="SUPFAM" id="SSF54849">
    <property type="entry name" value="GroEL-intermediate domain like"/>
    <property type="match status" value="1"/>
</dbReference>
<dbReference type="PROSITE" id="PS00296">
    <property type="entry name" value="CHAPERONINS_CPN60"/>
    <property type="match status" value="1"/>
</dbReference>
<organism>
    <name type="scientific">Streptococcus uberis (strain ATCC BAA-854 / 0140J)</name>
    <dbReference type="NCBI Taxonomy" id="218495"/>
    <lineage>
        <taxon>Bacteria</taxon>
        <taxon>Bacillati</taxon>
        <taxon>Bacillota</taxon>
        <taxon>Bacilli</taxon>
        <taxon>Lactobacillales</taxon>
        <taxon>Streptococcaceae</taxon>
        <taxon>Streptococcus</taxon>
    </lineage>
</organism>